<sequence length="378" mass="39874">MLKKLKDYRRIVVKIGSALLVDRATGLKREWLESLGQDIAALQHAGVEVLVVSSGAIALGRTVLGLPKKALKLEESQAAAAAGQIALAKAYADVLGGHGIKSGQILVTLSDTEERRRYLNARATIETLLKLKAVPIINENDTVATTEIRYGDNDRLAARVATMMGADLLILLSDIDGLYTAPPHKNPDAQFLPFVETITPQIEAMAGAAASELSRGGMKTKLDAGKIANAAGTAMIITSGTRFGPLSAIDRGERATLFEAAHAPVNAWKTWISGNLEPAGRLTVDAGAVKALKSGKSLLPAGVKEVDGDFERGDTVAVMNEDGREIARGLIAYDAADARKVAGHKSDEISAILGYDARAAMIHRNDLVVRAASDAKAA</sequence>
<comment type="function">
    <text evidence="1">Catalyzes the transfer of a phosphate group to glutamate to form L-glutamate 5-phosphate.</text>
</comment>
<comment type="catalytic activity">
    <reaction evidence="1">
        <text>L-glutamate + ATP = L-glutamyl 5-phosphate + ADP</text>
        <dbReference type="Rhea" id="RHEA:14877"/>
        <dbReference type="ChEBI" id="CHEBI:29985"/>
        <dbReference type="ChEBI" id="CHEBI:30616"/>
        <dbReference type="ChEBI" id="CHEBI:58274"/>
        <dbReference type="ChEBI" id="CHEBI:456216"/>
        <dbReference type="EC" id="2.7.2.11"/>
    </reaction>
</comment>
<comment type="pathway">
    <text evidence="1">Amino-acid biosynthesis; L-proline biosynthesis; L-glutamate 5-semialdehyde from L-glutamate: step 1/2.</text>
</comment>
<comment type="subcellular location">
    <subcellularLocation>
        <location evidence="1">Cytoplasm</location>
    </subcellularLocation>
</comment>
<comment type="similarity">
    <text evidence="1">Belongs to the glutamate 5-kinase family.</text>
</comment>
<gene>
    <name evidence="1" type="primary">proB</name>
    <name type="ordered locus">BOV_1777</name>
</gene>
<accession>A5VSI4</accession>
<reference key="1">
    <citation type="journal article" date="2009" name="PLoS ONE">
        <title>Genome degradation in Brucella ovis corresponds with narrowing of its host range and tissue tropism.</title>
        <authorList>
            <person name="Tsolis R.M."/>
            <person name="Seshadri R."/>
            <person name="Santos R.L."/>
            <person name="Sangari F.J."/>
            <person name="Lobo J.M."/>
            <person name="de Jong M.F."/>
            <person name="Ren Q."/>
            <person name="Myers G."/>
            <person name="Brinkac L.M."/>
            <person name="Nelson W.C."/>
            <person name="Deboy R.T."/>
            <person name="Angiuoli S."/>
            <person name="Khouri H."/>
            <person name="Dimitrov G."/>
            <person name="Robinson J.R."/>
            <person name="Mulligan S."/>
            <person name="Walker R.L."/>
            <person name="Elzer P.E."/>
            <person name="Hassan K.A."/>
            <person name="Paulsen I.T."/>
        </authorList>
    </citation>
    <scope>NUCLEOTIDE SEQUENCE [LARGE SCALE GENOMIC DNA]</scope>
    <source>
        <strain>ATCC 25840 / 63/290 / NCTC 10512</strain>
    </source>
</reference>
<protein>
    <recommendedName>
        <fullName evidence="1">Glutamate 5-kinase</fullName>
        <ecNumber evidence="1">2.7.2.11</ecNumber>
    </recommendedName>
    <alternativeName>
        <fullName evidence="1">Gamma-glutamyl kinase</fullName>
        <shortName evidence="1">GK</shortName>
    </alternativeName>
</protein>
<evidence type="ECO:0000255" key="1">
    <source>
        <dbReference type="HAMAP-Rule" id="MF_00456"/>
    </source>
</evidence>
<keyword id="KW-0028">Amino-acid biosynthesis</keyword>
<keyword id="KW-0067">ATP-binding</keyword>
<keyword id="KW-0963">Cytoplasm</keyword>
<keyword id="KW-0418">Kinase</keyword>
<keyword id="KW-0547">Nucleotide-binding</keyword>
<keyword id="KW-0641">Proline biosynthesis</keyword>
<keyword id="KW-0808">Transferase</keyword>
<name>PROB_BRUO2</name>
<feature type="chain" id="PRO_1000081039" description="Glutamate 5-kinase">
    <location>
        <begin position="1"/>
        <end position="378"/>
    </location>
</feature>
<feature type="domain" description="PUA" evidence="1">
    <location>
        <begin position="279"/>
        <end position="356"/>
    </location>
</feature>
<feature type="binding site" evidence="1">
    <location>
        <position position="14"/>
    </location>
    <ligand>
        <name>ATP</name>
        <dbReference type="ChEBI" id="CHEBI:30616"/>
    </ligand>
</feature>
<feature type="binding site" evidence="1">
    <location>
        <position position="54"/>
    </location>
    <ligand>
        <name>substrate</name>
    </ligand>
</feature>
<feature type="binding site" evidence="1">
    <location>
        <position position="141"/>
    </location>
    <ligand>
        <name>substrate</name>
    </ligand>
</feature>
<feature type="binding site" evidence="1">
    <location>
        <position position="153"/>
    </location>
    <ligand>
        <name>substrate</name>
    </ligand>
</feature>
<feature type="binding site" evidence="1">
    <location>
        <begin position="173"/>
        <end position="174"/>
    </location>
    <ligand>
        <name>ATP</name>
        <dbReference type="ChEBI" id="CHEBI:30616"/>
    </ligand>
</feature>
<dbReference type="EC" id="2.7.2.11" evidence="1"/>
<dbReference type="EMBL" id="CP000708">
    <property type="protein sequence ID" value="ABQ61630.1"/>
    <property type="molecule type" value="Genomic_DNA"/>
</dbReference>
<dbReference type="RefSeq" id="WP_004684325.1">
    <property type="nucleotide sequence ID" value="NC_009505.1"/>
</dbReference>
<dbReference type="SMR" id="A5VSI4"/>
<dbReference type="GeneID" id="97533036"/>
<dbReference type="KEGG" id="bov:BOV_1777"/>
<dbReference type="HOGENOM" id="CLU_025400_2_0_5"/>
<dbReference type="PhylomeDB" id="A5VSI4"/>
<dbReference type="UniPathway" id="UPA00098">
    <property type="reaction ID" value="UER00359"/>
</dbReference>
<dbReference type="Proteomes" id="UP000006383">
    <property type="component" value="Chromosome I"/>
</dbReference>
<dbReference type="GO" id="GO:0005829">
    <property type="term" value="C:cytosol"/>
    <property type="evidence" value="ECO:0007669"/>
    <property type="project" value="TreeGrafter"/>
</dbReference>
<dbReference type="GO" id="GO:0005524">
    <property type="term" value="F:ATP binding"/>
    <property type="evidence" value="ECO:0007669"/>
    <property type="project" value="UniProtKB-KW"/>
</dbReference>
<dbReference type="GO" id="GO:0004349">
    <property type="term" value="F:glutamate 5-kinase activity"/>
    <property type="evidence" value="ECO:0007669"/>
    <property type="project" value="UniProtKB-UniRule"/>
</dbReference>
<dbReference type="GO" id="GO:0003723">
    <property type="term" value="F:RNA binding"/>
    <property type="evidence" value="ECO:0007669"/>
    <property type="project" value="InterPro"/>
</dbReference>
<dbReference type="GO" id="GO:0055129">
    <property type="term" value="P:L-proline biosynthetic process"/>
    <property type="evidence" value="ECO:0007669"/>
    <property type="project" value="UniProtKB-UniRule"/>
</dbReference>
<dbReference type="CDD" id="cd04242">
    <property type="entry name" value="AAK_G5K_ProB"/>
    <property type="match status" value="1"/>
</dbReference>
<dbReference type="CDD" id="cd21157">
    <property type="entry name" value="PUA_G5K"/>
    <property type="match status" value="1"/>
</dbReference>
<dbReference type="FunFam" id="2.30.130.10:FF:000007">
    <property type="entry name" value="Glutamate 5-kinase"/>
    <property type="match status" value="1"/>
</dbReference>
<dbReference type="FunFam" id="3.40.1160.10:FF:000018">
    <property type="entry name" value="Glutamate 5-kinase"/>
    <property type="match status" value="1"/>
</dbReference>
<dbReference type="Gene3D" id="3.40.1160.10">
    <property type="entry name" value="Acetylglutamate kinase-like"/>
    <property type="match status" value="1"/>
</dbReference>
<dbReference type="Gene3D" id="2.30.130.10">
    <property type="entry name" value="PUA domain"/>
    <property type="match status" value="1"/>
</dbReference>
<dbReference type="HAMAP" id="MF_00456">
    <property type="entry name" value="ProB"/>
    <property type="match status" value="1"/>
</dbReference>
<dbReference type="InterPro" id="IPR036393">
    <property type="entry name" value="AceGlu_kinase-like_sf"/>
</dbReference>
<dbReference type="InterPro" id="IPR001048">
    <property type="entry name" value="Asp/Glu/Uridylate_kinase"/>
</dbReference>
<dbReference type="InterPro" id="IPR041739">
    <property type="entry name" value="G5K_ProB"/>
</dbReference>
<dbReference type="InterPro" id="IPR001057">
    <property type="entry name" value="Glu/AcGlu_kinase"/>
</dbReference>
<dbReference type="InterPro" id="IPR011529">
    <property type="entry name" value="Glu_5kinase"/>
</dbReference>
<dbReference type="InterPro" id="IPR005715">
    <property type="entry name" value="Glu_5kinase/COase_Synthase"/>
</dbReference>
<dbReference type="InterPro" id="IPR019797">
    <property type="entry name" value="Glutamate_5-kinase_CS"/>
</dbReference>
<dbReference type="InterPro" id="IPR002478">
    <property type="entry name" value="PUA"/>
</dbReference>
<dbReference type="InterPro" id="IPR015947">
    <property type="entry name" value="PUA-like_sf"/>
</dbReference>
<dbReference type="InterPro" id="IPR036974">
    <property type="entry name" value="PUA_sf"/>
</dbReference>
<dbReference type="NCBIfam" id="TIGR01027">
    <property type="entry name" value="proB"/>
    <property type="match status" value="1"/>
</dbReference>
<dbReference type="PANTHER" id="PTHR43654">
    <property type="entry name" value="GLUTAMATE 5-KINASE"/>
    <property type="match status" value="1"/>
</dbReference>
<dbReference type="PANTHER" id="PTHR43654:SF1">
    <property type="entry name" value="ISOPENTENYL PHOSPHATE KINASE"/>
    <property type="match status" value="1"/>
</dbReference>
<dbReference type="Pfam" id="PF00696">
    <property type="entry name" value="AA_kinase"/>
    <property type="match status" value="1"/>
</dbReference>
<dbReference type="Pfam" id="PF01472">
    <property type="entry name" value="PUA"/>
    <property type="match status" value="1"/>
</dbReference>
<dbReference type="PIRSF" id="PIRSF000729">
    <property type="entry name" value="GK"/>
    <property type="match status" value="1"/>
</dbReference>
<dbReference type="PRINTS" id="PR00474">
    <property type="entry name" value="GLU5KINASE"/>
</dbReference>
<dbReference type="SMART" id="SM00359">
    <property type="entry name" value="PUA"/>
    <property type="match status" value="1"/>
</dbReference>
<dbReference type="SUPFAM" id="SSF53633">
    <property type="entry name" value="Carbamate kinase-like"/>
    <property type="match status" value="1"/>
</dbReference>
<dbReference type="SUPFAM" id="SSF88697">
    <property type="entry name" value="PUA domain-like"/>
    <property type="match status" value="1"/>
</dbReference>
<dbReference type="PROSITE" id="PS00902">
    <property type="entry name" value="GLUTAMATE_5_KINASE"/>
    <property type="match status" value="1"/>
</dbReference>
<dbReference type="PROSITE" id="PS50890">
    <property type="entry name" value="PUA"/>
    <property type="match status" value="1"/>
</dbReference>
<proteinExistence type="inferred from homology"/>
<organism>
    <name type="scientific">Brucella ovis (strain ATCC 25840 / 63/290 / NCTC 10512)</name>
    <dbReference type="NCBI Taxonomy" id="444178"/>
    <lineage>
        <taxon>Bacteria</taxon>
        <taxon>Pseudomonadati</taxon>
        <taxon>Pseudomonadota</taxon>
        <taxon>Alphaproteobacteria</taxon>
        <taxon>Hyphomicrobiales</taxon>
        <taxon>Brucellaceae</taxon>
        <taxon>Brucella/Ochrobactrum group</taxon>
        <taxon>Brucella</taxon>
    </lineage>
</organism>